<feature type="chain" id="PRO_1000054540" description="Large ribosomal subunit protein uL15">
    <location>
        <begin position="1"/>
        <end position="144"/>
    </location>
</feature>
<feature type="region of interest" description="Disordered" evidence="2">
    <location>
        <begin position="1"/>
        <end position="54"/>
    </location>
</feature>
<feature type="compositionally biased region" description="Gly residues" evidence="2">
    <location>
        <begin position="21"/>
        <end position="31"/>
    </location>
</feature>
<feature type="compositionally biased region" description="Gly residues" evidence="2">
    <location>
        <begin position="42"/>
        <end position="52"/>
    </location>
</feature>
<proteinExistence type="inferred from homology"/>
<reference key="1">
    <citation type="submission" date="2007-04" db="EMBL/GenBank/DDBJ databases">
        <title>Complete sequence of Shewanella putrefaciens CN-32.</title>
        <authorList>
            <consortium name="US DOE Joint Genome Institute"/>
            <person name="Copeland A."/>
            <person name="Lucas S."/>
            <person name="Lapidus A."/>
            <person name="Barry K."/>
            <person name="Detter J.C."/>
            <person name="Glavina del Rio T."/>
            <person name="Hammon N."/>
            <person name="Israni S."/>
            <person name="Dalin E."/>
            <person name="Tice H."/>
            <person name="Pitluck S."/>
            <person name="Chain P."/>
            <person name="Malfatti S."/>
            <person name="Shin M."/>
            <person name="Vergez L."/>
            <person name="Schmutz J."/>
            <person name="Larimer F."/>
            <person name="Land M."/>
            <person name="Hauser L."/>
            <person name="Kyrpides N."/>
            <person name="Mikhailova N."/>
            <person name="Romine M.F."/>
            <person name="Fredrickson J."/>
            <person name="Tiedje J."/>
            <person name="Richardson P."/>
        </authorList>
    </citation>
    <scope>NUCLEOTIDE SEQUENCE [LARGE SCALE GENOMIC DNA]</scope>
    <source>
        <strain>CN-32 / ATCC BAA-453</strain>
    </source>
</reference>
<keyword id="KW-0687">Ribonucleoprotein</keyword>
<keyword id="KW-0689">Ribosomal protein</keyword>
<keyword id="KW-0694">RNA-binding</keyword>
<keyword id="KW-0699">rRNA-binding</keyword>
<protein>
    <recommendedName>
        <fullName evidence="1">Large ribosomal subunit protein uL15</fullName>
    </recommendedName>
    <alternativeName>
        <fullName evidence="3">50S ribosomal protein L15</fullName>
    </alternativeName>
</protein>
<sequence length="144" mass="15097">MRLNTLSPAAGSKHAPKRVGRGMGSGLGKTAGRGHKGQKSRSGGGVRPGFEGGQMPLKIRLPKFGFTSRRAMVTAEVRVLELAKVNGDVIDLNALKDANVITRNIQFAKIVLSGTIERPVTVKGLKVTKGARAAIEAAGGKIEE</sequence>
<comment type="function">
    <text evidence="1">Binds to the 23S rRNA.</text>
</comment>
<comment type="subunit">
    <text evidence="1">Part of the 50S ribosomal subunit.</text>
</comment>
<comment type="similarity">
    <text evidence="1">Belongs to the universal ribosomal protein uL15 family.</text>
</comment>
<dbReference type="EMBL" id="CP000681">
    <property type="protein sequence ID" value="ABP77447.1"/>
    <property type="molecule type" value="Genomic_DNA"/>
</dbReference>
<dbReference type="SMR" id="A4YBW4"/>
<dbReference type="STRING" id="319224.Sputcn32_3740"/>
<dbReference type="KEGG" id="spc:Sputcn32_3740"/>
<dbReference type="eggNOG" id="COG0200">
    <property type="taxonomic scope" value="Bacteria"/>
</dbReference>
<dbReference type="HOGENOM" id="CLU_055188_4_2_6"/>
<dbReference type="GO" id="GO:0022625">
    <property type="term" value="C:cytosolic large ribosomal subunit"/>
    <property type="evidence" value="ECO:0007669"/>
    <property type="project" value="TreeGrafter"/>
</dbReference>
<dbReference type="GO" id="GO:0019843">
    <property type="term" value="F:rRNA binding"/>
    <property type="evidence" value="ECO:0007669"/>
    <property type="project" value="UniProtKB-UniRule"/>
</dbReference>
<dbReference type="GO" id="GO:0003735">
    <property type="term" value="F:structural constituent of ribosome"/>
    <property type="evidence" value="ECO:0007669"/>
    <property type="project" value="InterPro"/>
</dbReference>
<dbReference type="GO" id="GO:0006412">
    <property type="term" value="P:translation"/>
    <property type="evidence" value="ECO:0007669"/>
    <property type="project" value="UniProtKB-UniRule"/>
</dbReference>
<dbReference type="FunFam" id="3.100.10.10:FF:000003">
    <property type="entry name" value="50S ribosomal protein L15"/>
    <property type="match status" value="1"/>
</dbReference>
<dbReference type="Gene3D" id="3.100.10.10">
    <property type="match status" value="1"/>
</dbReference>
<dbReference type="HAMAP" id="MF_01341">
    <property type="entry name" value="Ribosomal_uL15"/>
    <property type="match status" value="1"/>
</dbReference>
<dbReference type="InterPro" id="IPR030878">
    <property type="entry name" value="Ribosomal_uL15"/>
</dbReference>
<dbReference type="InterPro" id="IPR021131">
    <property type="entry name" value="Ribosomal_uL15/eL18"/>
</dbReference>
<dbReference type="InterPro" id="IPR036227">
    <property type="entry name" value="Ribosomal_uL15/eL18_sf"/>
</dbReference>
<dbReference type="InterPro" id="IPR005749">
    <property type="entry name" value="Ribosomal_uL15_bac-type"/>
</dbReference>
<dbReference type="InterPro" id="IPR001196">
    <property type="entry name" value="Ribosomal_uL15_CS"/>
</dbReference>
<dbReference type="NCBIfam" id="TIGR01071">
    <property type="entry name" value="rplO_bact"/>
    <property type="match status" value="1"/>
</dbReference>
<dbReference type="PANTHER" id="PTHR12934">
    <property type="entry name" value="50S RIBOSOMAL PROTEIN L15"/>
    <property type="match status" value="1"/>
</dbReference>
<dbReference type="PANTHER" id="PTHR12934:SF11">
    <property type="entry name" value="LARGE RIBOSOMAL SUBUNIT PROTEIN UL15M"/>
    <property type="match status" value="1"/>
</dbReference>
<dbReference type="Pfam" id="PF00828">
    <property type="entry name" value="Ribosomal_L27A"/>
    <property type="match status" value="1"/>
</dbReference>
<dbReference type="SUPFAM" id="SSF52080">
    <property type="entry name" value="Ribosomal proteins L15p and L18e"/>
    <property type="match status" value="1"/>
</dbReference>
<dbReference type="PROSITE" id="PS00475">
    <property type="entry name" value="RIBOSOMAL_L15"/>
    <property type="match status" value="1"/>
</dbReference>
<organism>
    <name type="scientific">Shewanella putrefaciens (strain CN-32 / ATCC BAA-453)</name>
    <dbReference type="NCBI Taxonomy" id="319224"/>
    <lineage>
        <taxon>Bacteria</taxon>
        <taxon>Pseudomonadati</taxon>
        <taxon>Pseudomonadota</taxon>
        <taxon>Gammaproteobacteria</taxon>
        <taxon>Alteromonadales</taxon>
        <taxon>Shewanellaceae</taxon>
        <taxon>Shewanella</taxon>
    </lineage>
</organism>
<evidence type="ECO:0000255" key="1">
    <source>
        <dbReference type="HAMAP-Rule" id="MF_01341"/>
    </source>
</evidence>
<evidence type="ECO:0000256" key="2">
    <source>
        <dbReference type="SAM" id="MobiDB-lite"/>
    </source>
</evidence>
<evidence type="ECO:0000305" key="3"/>
<gene>
    <name evidence="1" type="primary">rplO</name>
    <name type="ordered locus">Sputcn32_3740</name>
</gene>
<name>RL15_SHEPC</name>
<accession>A4YBW4</accession>